<dbReference type="EMBL" id="AM269999">
    <property type="protein sequence ID" value="CAK96394.1"/>
    <property type="status" value="ALT_SEQ"/>
    <property type="molecule type" value="Genomic_DNA"/>
</dbReference>
<dbReference type="RefSeq" id="XP_001399361.2">
    <property type="nucleotide sequence ID" value="XM_001399324.2"/>
</dbReference>
<dbReference type="RefSeq" id="XP_003188604.1">
    <property type="nucleotide sequence ID" value="XM_003188556.1"/>
</dbReference>
<dbReference type="SMR" id="A2QC41"/>
<dbReference type="EnsemblFungi" id="CAK96394">
    <property type="protein sequence ID" value="CAK96394"/>
    <property type="gene ID" value="An02g02200"/>
</dbReference>
<dbReference type="GeneID" id="10098042"/>
<dbReference type="KEGG" id="ang:An02g02200"/>
<dbReference type="OrthoDB" id="131126at5052"/>
<dbReference type="Proteomes" id="UP000006706">
    <property type="component" value="Chromosome 4R"/>
</dbReference>
<dbReference type="GO" id="GO:0016592">
    <property type="term" value="C:mediator complex"/>
    <property type="evidence" value="ECO:0007669"/>
    <property type="project" value="InterPro"/>
</dbReference>
<dbReference type="GO" id="GO:0003712">
    <property type="term" value="F:transcription coregulator activity"/>
    <property type="evidence" value="ECO:0007669"/>
    <property type="project" value="TreeGrafter"/>
</dbReference>
<dbReference type="GO" id="GO:0006357">
    <property type="term" value="P:regulation of transcription by RNA polymerase II"/>
    <property type="evidence" value="ECO:0007669"/>
    <property type="project" value="TreeGrafter"/>
</dbReference>
<dbReference type="Gene3D" id="6.10.280.10">
    <property type="entry name" value="Mediator complex, subunit Med21"/>
    <property type="match status" value="1"/>
</dbReference>
<dbReference type="InterPro" id="IPR037212">
    <property type="entry name" value="Med7/Med21-like"/>
</dbReference>
<dbReference type="InterPro" id="IPR021384">
    <property type="entry name" value="Mediator_Med21"/>
</dbReference>
<dbReference type="PANTHER" id="PTHR13381:SF0">
    <property type="entry name" value="MEDIATOR OF RNA POLYMERASE II TRANSCRIPTION SUBUNIT 21"/>
    <property type="match status" value="1"/>
</dbReference>
<dbReference type="PANTHER" id="PTHR13381">
    <property type="entry name" value="RNA POLYMERASE II HOLOENZYME COMPONENT SRB7"/>
    <property type="match status" value="1"/>
</dbReference>
<dbReference type="Pfam" id="PF11221">
    <property type="entry name" value="Med21"/>
    <property type="match status" value="1"/>
</dbReference>
<dbReference type="SUPFAM" id="SSF140718">
    <property type="entry name" value="Mediator hinge subcomplex-like"/>
    <property type="match status" value="1"/>
</dbReference>
<organism>
    <name type="scientific">Aspergillus niger (strain ATCC MYA-4892 / CBS 513.88 / FGSC A1513)</name>
    <dbReference type="NCBI Taxonomy" id="425011"/>
    <lineage>
        <taxon>Eukaryota</taxon>
        <taxon>Fungi</taxon>
        <taxon>Dikarya</taxon>
        <taxon>Ascomycota</taxon>
        <taxon>Pezizomycotina</taxon>
        <taxon>Eurotiomycetes</taxon>
        <taxon>Eurotiomycetidae</taxon>
        <taxon>Eurotiales</taxon>
        <taxon>Aspergillaceae</taxon>
        <taxon>Aspergillus</taxon>
        <taxon>Aspergillus subgen. Circumdati</taxon>
    </lineage>
</organism>
<comment type="function">
    <text evidence="1">Component of the Mediator complex, a coactivator involved in the regulated transcription of nearly all RNA polymerase II-dependent genes. Mediator functions as a bridge to convey information from gene-specific regulatory proteins to the basal RNA polymerase II transcription machinery. Mediator is recruited to promoters by direct interactions with regulatory proteins and serves as a scaffold for the assembly of a functional preinitiation complex with RNA polymerase II and the general transcription factors (By similarity).</text>
</comment>
<comment type="subunit">
    <text evidence="1">Component of the Mediator complex.</text>
</comment>
<comment type="subcellular location">
    <subcellularLocation>
        <location evidence="1">Nucleus</location>
    </subcellularLocation>
</comment>
<comment type="similarity">
    <text evidence="4">Belongs to the Mediator complex subunit 21 family.</text>
</comment>
<comment type="sequence caution" evidence="4">
    <conflict type="erroneous gene model prediction">
        <sequence resource="EMBL-CDS" id="CAK96394"/>
    </conflict>
</comment>
<reference key="1">
    <citation type="journal article" date="2007" name="Nat. Biotechnol.">
        <title>Genome sequencing and analysis of the versatile cell factory Aspergillus niger CBS 513.88.</title>
        <authorList>
            <person name="Pel H.J."/>
            <person name="de Winde J.H."/>
            <person name="Archer D.B."/>
            <person name="Dyer P.S."/>
            <person name="Hofmann G."/>
            <person name="Schaap P.J."/>
            <person name="Turner G."/>
            <person name="de Vries R.P."/>
            <person name="Albang R."/>
            <person name="Albermann K."/>
            <person name="Andersen M.R."/>
            <person name="Bendtsen J.D."/>
            <person name="Benen J.A.E."/>
            <person name="van den Berg M."/>
            <person name="Breestraat S."/>
            <person name="Caddick M.X."/>
            <person name="Contreras R."/>
            <person name="Cornell M."/>
            <person name="Coutinho P.M."/>
            <person name="Danchin E.G.J."/>
            <person name="Debets A.J.M."/>
            <person name="Dekker P."/>
            <person name="van Dijck P.W.M."/>
            <person name="van Dijk A."/>
            <person name="Dijkhuizen L."/>
            <person name="Driessen A.J.M."/>
            <person name="d'Enfert C."/>
            <person name="Geysens S."/>
            <person name="Goosen C."/>
            <person name="Groot G.S.P."/>
            <person name="de Groot P.W.J."/>
            <person name="Guillemette T."/>
            <person name="Henrissat B."/>
            <person name="Herweijer M."/>
            <person name="van den Hombergh J.P.T.W."/>
            <person name="van den Hondel C.A.M.J.J."/>
            <person name="van der Heijden R.T.J.M."/>
            <person name="van der Kaaij R.M."/>
            <person name="Klis F.M."/>
            <person name="Kools H.J."/>
            <person name="Kubicek C.P."/>
            <person name="van Kuyk P.A."/>
            <person name="Lauber J."/>
            <person name="Lu X."/>
            <person name="van der Maarel M.J.E.C."/>
            <person name="Meulenberg R."/>
            <person name="Menke H."/>
            <person name="Mortimer M.A."/>
            <person name="Nielsen J."/>
            <person name="Oliver S.G."/>
            <person name="Olsthoorn M."/>
            <person name="Pal K."/>
            <person name="van Peij N.N.M.E."/>
            <person name="Ram A.F.J."/>
            <person name="Rinas U."/>
            <person name="Roubos J.A."/>
            <person name="Sagt C.M.J."/>
            <person name="Schmoll M."/>
            <person name="Sun J."/>
            <person name="Ussery D."/>
            <person name="Varga J."/>
            <person name="Vervecken W."/>
            <person name="van de Vondervoort P.J.J."/>
            <person name="Wedler H."/>
            <person name="Woesten H.A.B."/>
            <person name="Zeng A.-P."/>
            <person name="van Ooyen A.J.J."/>
            <person name="Visser J."/>
            <person name="Stam H."/>
        </authorList>
    </citation>
    <scope>NUCLEOTIDE SEQUENCE [LARGE SCALE GENOMIC DNA]</scope>
    <source>
        <strain>ATCC MYA-4892 / CBS 513.88 / FGSC A1513</strain>
    </source>
</reference>
<evidence type="ECO:0000250" key="1"/>
<evidence type="ECO:0000255" key="2"/>
<evidence type="ECO:0000256" key="3">
    <source>
        <dbReference type="SAM" id="MobiDB-lite"/>
    </source>
</evidence>
<evidence type="ECO:0000305" key="4"/>
<gene>
    <name type="primary">srb7</name>
    <name type="synonym">med21</name>
    <name type="ORF">An02g02200</name>
</gene>
<keyword id="KW-0010">Activator</keyword>
<keyword id="KW-0175">Coiled coil</keyword>
<keyword id="KW-0539">Nucleus</keyword>
<keyword id="KW-1185">Reference proteome</keyword>
<keyword id="KW-0804">Transcription</keyword>
<keyword id="KW-0805">Transcription regulation</keyword>
<proteinExistence type="inferred from homology"/>
<accession>A2QC41</accession>
<sequence>MADILTQLQTCLDQLATQFYATLCYLTTYHDNIPATPPPTSTTPSAAPLLAKIPKNASTPPVPASAPQAAQSQSQASPPPPDTANPQTGGQHADQQQQSPDGEGLPAPDSPATFAARQRELARDLVIKEQQIEYLISVLPGIDSSEAEQERRIRELEGELRIVEGVREERRRELGVLRRRLEGVLGVVERGIYSRD</sequence>
<name>MED21_ASPNC</name>
<feature type="chain" id="PRO_0000305958" description="Mediator of RNA polymerase II transcription subunit 21">
    <location>
        <begin position="1"/>
        <end position="196"/>
    </location>
</feature>
<feature type="region of interest" description="Disordered" evidence="3">
    <location>
        <begin position="52"/>
        <end position="111"/>
    </location>
</feature>
<feature type="coiled-coil region" evidence="2">
    <location>
        <begin position="144"/>
        <end position="174"/>
    </location>
</feature>
<feature type="compositionally biased region" description="Low complexity" evidence="3">
    <location>
        <begin position="65"/>
        <end position="76"/>
    </location>
</feature>
<feature type="compositionally biased region" description="Low complexity" evidence="3">
    <location>
        <begin position="87"/>
        <end position="98"/>
    </location>
</feature>
<protein>
    <recommendedName>
        <fullName>Mediator of RNA polymerase II transcription subunit 21</fullName>
    </recommendedName>
    <alternativeName>
        <fullName>Mediator complex subunit 21</fullName>
    </alternativeName>
</protein>